<keyword id="KW-0963">Cytoplasm</keyword>
<keyword id="KW-0489">Methyltransferase</keyword>
<keyword id="KW-0698">rRNA processing</keyword>
<keyword id="KW-0949">S-adenosyl-L-methionine</keyword>
<keyword id="KW-0808">Transferase</keyword>
<sequence length="331" mass="35993">MDPRSEVLLRQAELFEGELLLAGLPADDLLGLLPQAHGWSWHAGDQAQLAARFAGRSRFDTQMPEGDYRAAVLFLPKSRELTDYLLQALASRLTGRPLYLVGEKRGGIERAAKQLAVYGKPRKLDSARHCQLWSVQIEQAPATPDLDALAQVYSLQLADGPLQVVSLPGVFAHGRLDRGSALLLEHLDSLPQGHLLDFGCGAGVIGAALKRRYPSSRVSLLDVDAFALASSRLTLARNGLEAELIAGTGIESAPGELAAIVSNPPFHQGVHTHYQASENLLTQAARHLRDGGELRLVANSFLKYPPLIERHLGPCRTLAEAEGFRIYSARR</sequence>
<evidence type="ECO:0000255" key="1">
    <source>
        <dbReference type="HAMAP-Rule" id="MF_01862"/>
    </source>
</evidence>
<feature type="chain" id="PRO_0000369741" description="Ribosomal RNA small subunit methyltransferase C">
    <location>
        <begin position="1"/>
        <end position="331"/>
    </location>
</feature>
<gene>
    <name evidence="1" type="primary">rsmC</name>
    <name type="ordered locus">Pmen_3665</name>
</gene>
<organism>
    <name type="scientific">Ectopseudomonas mendocina (strain ymp)</name>
    <name type="common">Pseudomonas mendocina</name>
    <dbReference type="NCBI Taxonomy" id="399739"/>
    <lineage>
        <taxon>Bacteria</taxon>
        <taxon>Pseudomonadati</taxon>
        <taxon>Pseudomonadota</taxon>
        <taxon>Gammaproteobacteria</taxon>
        <taxon>Pseudomonadales</taxon>
        <taxon>Pseudomonadaceae</taxon>
        <taxon>Ectopseudomonas</taxon>
    </lineage>
</organism>
<protein>
    <recommendedName>
        <fullName evidence="1">Ribosomal RNA small subunit methyltransferase C</fullName>
        <ecNumber evidence="1">2.1.1.172</ecNumber>
    </recommendedName>
    <alternativeName>
        <fullName evidence="1">16S rRNA m2G1207 methyltransferase</fullName>
    </alternativeName>
    <alternativeName>
        <fullName evidence="1">rRNA (guanine-N(2)-)-methyltransferase RsmC</fullName>
    </alternativeName>
</protein>
<proteinExistence type="inferred from homology"/>
<accession>A4XYJ7</accession>
<reference key="1">
    <citation type="submission" date="2007-04" db="EMBL/GenBank/DDBJ databases">
        <title>Complete sequence of Pseudomonas mendocina ymp.</title>
        <authorList>
            <consortium name="US DOE Joint Genome Institute"/>
            <person name="Copeland A."/>
            <person name="Lucas S."/>
            <person name="Lapidus A."/>
            <person name="Barry K."/>
            <person name="Glavina del Rio T."/>
            <person name="Dalin E."/>
            <person name="Tice H."/>
            <person name="Pitluck S."/>
            <person name="Kiss H."/>
            <person name="Brettin T."/>
            <person name="Detter J.C."/>
            <person name="Bruce D."/>
            <person name="Han C."/>
            <person name="Schmutz J."/>
            <person name="Larimer F."/>
            <person name="Land M."/>
            <person name="Hauser L."/>
            <person name="Kyrpides N."/>
            <person name="Mikhailova N."/>
            <person name="Hersman L."/>
            <person name="Dubois J."/>
            <person name="Maurice P."/>
            <person name="Richardson P."/>
        </authorList>
    </citation>
    <scope>NUCLEOTIDE SEQUENCE [LARGE SCALE GENOMIC DNA]</scope>
    <source>
        <strain>ymp</strain>
    </source>
</reference>
<dbReference type="EC" id="2.1.1.172" evidence="1"/>
<dbReference type="EMBL" id="CP000680">
    <property type="protein sequence ID" value="ABP86413.1"/>
    <property type="molecule type" value="Genomic_DNA"/>
</dbReference>
<dbReference type="SMR" id="A4XYJ7"/>
<dbReference type="STRING" id="399739.Pmen_3665"/>
<dbReference type="KEGG" id="pmy:Pmen_3665"/>
<dbReference type="PATRIC" id="fig|399739.8.peg.3716"/>
<dbReference type="eggNOG" id="COG2813">
    <property type="taxonomic scope" value="Bacteria"/>
</dbReference>
<dbReference type="HOGENOM" id="CLU_049581_0_0_6"/>
<dbReference type="OrthoDB" id="9816072at2"/>
<dbReference type="GO" id="GO:0005737">
    <property type="term" value="C:cytoplasm"/>
    <property type="evidence" value="ECO:0007669"/>
    <property type="project" value="UniProtKB-SubCell"/>
</dbReference>
<dbReference type="GO" id="GO:0052914">
    <property type="term" value="F:16S rRNA (guanine(1207)-N(2))-methyltransferase activity"/>
    <property type="evidence" value="ECO:0007669"/>
    <property type="project" value="UniProtKB-EC"/>
</dbReference>
<dbReference type="GO" id="GO:0003676">
    <property type="term" value="F:nucleic acid binding"/>
    <property type="evidence" value="ECO:0007669"/>
    <property type="project" value="InterPro"/>
</dbReference>
<dbReference type="CDD" id="cd02440">
    <property type="entry name" value="AdoMet_MTases"/>
    <property type="match status" value="1"/>
</dbReference>
<dbReference type="Gene3D" id="3.40.50.150">
    <property type="entry name" value="Vaccinia Virus protein VP39"/>
    <property type="match status" value="2"/>
</dbReference>
<dbReference type="HAMAP" id="MF_01862">
    <property type="entry name" value="16SrRNA_methyltr_C"/>
    <property type="match status" value="1"/>
</dbReference>
<dbReference type="InterPro" id="IPR002052">
    <property type="entry name" value="DNA_methylase_N6_adenine_CS"/>
</dbReference>
<dbReference type="InterPro" id="IPR013675">
    <property type="entry name" value="Mtase_sm_N"/>
</dbReference>
<dbReference type="InterPro" id="IPR023543">
    <property type="entry name" value="rRNA_ssu_MeTfrase_C"/>
</dbReference>
<dbReference type="InterPro" id="IPR046977">
    <property type="entry name" value="RsmC/RlmG"/>
</dbReference>
<dbReference type="InterPro" id="IPR029063">
    <property type="entry name" value="SAM-dependent_MTases_sf"/>
</dbReference>
<dbReference type="InterPro" id="IPR007848">
    <property type="entry name" value="Small_mtfrase_dom"/>
</dbReference>
<dbReference type="PANTHER" id="PTHR47816">
    <property type="entry name" value="RIBOSOMAL RNA SMALL SUBUNIT METHYLTRANSFERASE C"/>
    <property type="match status" value="1"/>
</dbReference>
<dbReference type="PANTHER" id="PTHR47816:SF4">
    <property type="entry name" value="RIBOSOMAL RNA SMALL SUBUNIT METHYLTRANSFERASE C"/>
    <property type="match status" value="1"/>
</dbReference>
<dbReference type="Pfam" id="PF05175">
    <property type="entry name" value="MTS"/>
    <property type="match status" value="1"/>
</dbReference>
<dbReference type="Pfam" id="PF08468">
    <property type="entry name" value="MTS_N"/>
    <property type="match status" value="1"/>
</dbReference>
<dbReference type="SUPFAM" id="SSF53335">
    <property type="entry name" value="S-adenosyl-L-methionine-dependent methyltransferases"/>
    <property type="match status" value="1"/>
</dbReference>
<comment type="function">
    <text evidence="1">Specifically methylates the guanine in position 1207 of 16S rRNA in the 30S particle.</text>
</comment>
<comment type="catalytic activity">
    <reaction evidence="1">
        <text>guanosine(1207) in 16S rRNA + S-adenosyl-L-methionine = N(2)-methylguanosine(1207) in 16S rRNA + S-adenosyl-L-homocysteine + H(+)</text>
        <dbReference type="Rhea" id="RHEA:42736"/>
        <dbReference type="Rhea" id="RHEA-COMP:10213"/>
        <dbReference type="Rhea" id="RHEA-COMP:10214"/>
        <dbReference type="ChEBI" id="CHEBI:15378"/>
        <dbReference type="ChEBI" id="CHEBI:57856"/>
        <dbReference type="ChEBI" id="CHEBI:59789"/>
        <dbReference type="ChEBI" id="CHEBI:74269"/>
        <dbReference type="ChEBI" id="CHEBI:74481"/>
        <dbReference type="EC" id="2.1.1.172"/>
    </reaction>
</comment>
<comment type="subunit">
    <text evidence="1">Monomer.</text>
</comment>
<comment type="subcellular location">
    <subcellularLocation>
        <location evidence="1">Cytoplasm</location>
    </subcellularLocation>
</comment>
<comment type="similarity">
    <text evidence="1">Belongs to the methyltransferase superfamily. RsmC family.</text>
</comment>
<name>RSMC_ECTM1</name>